<gene>
    <name evidence="1" type="primary">trpD</name>
    <name type="ordered locus">lpp0896</name>
</gene>
<comment type="function">
    <text evidence="1">Catalyzes the transfer of the phosphoribosyl group of 5-phosphorylribose-1-pyrophosphate (PRPP) to anthranilate to yield N-(5'-phosphoribosyl)-anthranilate (PRA).</text>
</comment>
<comment type="catalytic activity">
    <reaction evidence="1">
        <text>N-(5-phospho-beta-D-ribosyl)anthranilate + diphosphate = 5-phospho-alpha-D-ribose 1-diphosphate + anthranilate</text>
        <dbReference type="Rhea" id="RHEA:11768"/>
        <dbReference type="ChEBI" id="CHEBI:16567"/>
        <dbReference type="ChEBI" id="CHEBI:18277"/>
        <dbReference type="ChEBI" id="CHEBI:33019"/>
        <dbReference type="ChEBI" id="CHEBI:58017"/>
        <dbReference type="EC" id="2.4.2.18"/>
    </reaction>
</comment>
<comment type="cofactor">
    <cofactor evidence="1">
        <name>Mg(2+)</name>
        <dbReference type="ChEBI" id="CHEBI:18420"/>
    </cofactor>
    <text evidence="1">Binds 2 magnesium ions per monomer.</text>
</comment>
<comment type="pathway">
    <text evidence="1">Amino-acid biosynthesis; L-tryptophan biosynthesis; L-tryptophan from chorismate: step 2/5.</text>
</comment>
<comment type="subunit">
    <text evidence="1">Homodimer.</text>
</comment>
<comment type="similarity">
    <text evidence="1">Belongs to the anthranilate phosphoribosyltransferase family.</text>
</comment>
<keyword id="KW-0028">Amino-acid biosynthesis</keyword>
<keyword id="KW-0057">Aromatic amino acid biosynthesis</keyword>
<keyword id="KW-0328">Glycosyltransferase</keyword>
<keyword id="KW-0460">Magnesium</keyword>
<keyword id="KW-0479">Metal-binding</keyword>
<keyword id="KW-0808">Transferase</keyword>
<keyword id="KW-0822">Tryptophan biosynthesis</keyword>
<proteinExistence type="inferred from homology"/>
<feature type="chain" id="PRO_0000227165" description="Anthranilate phosphoribosyltransferase">
    <location>
        <begin position="1"/>
        <end position="344"/>
    </location>
</feature>
<feature type="binding site" evidence="1">
    <location>
        <position position="80"/>
    </location>
    <ligand>
        <name>5-phospho-alpha-D-ribose 1-diphosphate</name>
        <dbReference type="ChEBI" id="CHEBI:58017"/>
    </ligand>
</feature>
<feature type="binding site" evidence="1">
    <location>
        <position position="80"/>
    </location>
    <ligand>
        <name>anthranilate</name>
        <dbReference type="ChEBI" id="CHEBI:16567"/>
        <label>1</label>
    </ligand>
</feature>
<feature type="binding site" evidence="1">
    <location>
        <begin position="83"/>
        <end position="84"/>
    </location>
    <ligand>
        <name>5-phospho-alpha-D-ribose 1-diphosphate</name>
        <dbReference type="ChEBI" id="CHEBI:58017"/>
    </ligand>
</feature>
<feature type="binding site" evidence="1">
    <location>
        <position position="88"/>
    </location>
    <ligand>
        <name>5-phospho-alpha-D-ribose 1-diphosphate</name>
        <dbReference type="ChEBI" id="CHEBI:58017"/>
    </ligand>
</feature>
<feature type="binding site" evidence="1">
    <location>
        <begin position="90"/>
        <end position="93"/>
    </location>
    <ligand>
        <name>5-phospho-alpha-D-ribose 1-diphosphate</name>
        <dbReference type="ChEBI" id="CHEBI:58017"/>
    </ligand>
</feature>
<feature type="binding site" evidence="1">
    <location>
        <position position="92"/>
    </location>
    <ligand>
        <name>Mg(2+)</name>
        <dbReference type="ChEBI" id="CHEBI:18420"/>
        <label>1</label>
    </ligand>
</feature>
<feature type="binding site" evidence="1">
    <location>
        <begin position="108"/>
        <end position="116"/>
    </location>
    <ligand>
        <name>5-phospho-alpha-D-ribose 1-diphosphate</name>
        <dbReference type="ChEBI" id="CHEBI:58017"/>
    </ligand>
</feature>
<feature type="binding site" evidence="1">
    <location>
        <position position="111"/>
    </location>
    <ligand>
        <name>anthranilate</name>
        <dbReference type="ChEBI" id="CHEBI:16567"/>
        <label>1</label>
    </ligand>
</feature>
<feature type="binding site" evidence="1">
    <location>
        <position position="120"/>
    </location>
    <ligand>
        <name>5-phospho-alpha-D-ribose 1-diphosphate</name>
        <dbReference type="ChEBI" id="CHEBI:58017"/>
    </ligand>
</feature>
<feature type="binding site" evidence="1">
    <location>
        <position position="166"/>
    </location>
    <ligand>
        <name>anthranilate</name>
        <dbReference type="ChEBI" id="CHEBI:16567"/>
        <label>2</label>
    </ligand>
</feature>
<feature type="binding site" evidence="1">
    <location>
        <position position="225"/>
    </location>
    <ligand>
        <name>Mg(2+)</name>
        <dbReference type="ChEBI" id="CHEBI:18420"/>
        <label>2</label>
    </ligand>
</feature>
<feature type="binding site" evidence="1">
    <location>
        <position position="226"/>
    </location>
    <ligand>
        <name>Mg(2+)</name>
        <dbReference type="ChEBI" id="CHEBI:18420"/>
        <label>1</label>
    </ligand>
</feature>
<feature type="binding site" evidence="1">
    <location>
        <position position="226"/>
    </location>
    <ligand>
        <name>Mg(2+)</name>
        <dbReference type="ChEBI" id="CHEBI:18420"/>
        <label>2</label>
    </ligand>
</feature>
<evidence type="ECO:0000255" key="1">
    <source>
        <dbReference type="HAMAP-Rule" id="MF_00211"/>
    </source>
</evidence>
<reference key="1">
    <citation type="journal article" date="2004" name="Nat. Genet.">
        <title>Evidence in the Legionella pneumophila genome for exploitation of host cell functions and high genome plasticity.</title>
        <authorList>
            <person name="Cazalet C."/>
            <person name="Rusniok C."/>
            <person name="Brueggemann H."/>
            <person name="Zidane N."/>
            <person name="Magnier A."/>
            <person name="Ma L."/>
            <person name="Tichit M."/>
            <person name="Jarraud S."/>
            <person name="Bouchier C."/>
            <person name="Vandenesch F."/>
            <person name="Kunst F."/>
            <person name="Etienne J."/>
            <person name="Glaser P."/>
            <person name="Buchrieser C."/>
        </authorList>
    </citation>
    <scope>NUCLEOTIDE SEQUENCE [LARGE SCALE GENOMIC DNA]</scope>
    <source>
        <strain>Paris</strain>
    </source>
</reference>
<organism>
    <name type="scientific">Legionella pneumophila (strain Paris)</name>
    <dbReference type="NCBI Taxonomy" id="297246"/>
    <lineage>
        <taxon>Bacteria</taxon>
        <taxon>Pseudomonadati</taxon>
        <taxon>Pseudomonadota</taxon>
        <taxon>Gammaproteobacteria</taxon>
        <taxon>Legionellales</taxon>
        <taxon>Legionellaceae</taxon>
        <taxon>Legionella</taxon>
    </lineage>
</organism>
<accession>Q5X6R9</accession>
<sequence>MKPKLLFEQLLSRQDLSSDQMQEVIHACMTGEFSDVQIATFLALMRMKGETVNELTAAAQVMRQLAHKIDLGNPLIDIVGTGGDGRNTFNVSTACSFVVAAAGIKVAKHGNRSVSSRSGSADLLEQAGFILNLSDSQVQNCINQCQLAFLFAPHYHPAMQHARAARQQLGIRTLFNLLGPLINPAQVKRQVVGVFSTNWLKTIATVLANLGSERSLVISSQDGLDEISIAAKSEVVEYRDGNFKQWFISPEDYGLKHSSLDAIIVDSPEQSLHLIQSVLSGDSGPARDIVLLNSAAAIYCAKDGISFDAAIEEARIAIDSGKANLCFNKLRLLTQTLNKESNHE</sequence>
<protein>
    <recommendedName>
        <fullName evidence="1">Anthranilate phosphoribosyltransferase</fullName>
        <ecNumber evidence="1">2.4.2.18</ecNumber>
    </recommendedName>
</protein>
<name>TRPD_LEGPA</name>
<dbReference type="EC" id="2.4.2.18" evidence="1"/>
<dbReference type="EMBL" id="CR628336">
    <property type="protein sequence ID" value="CAH12047.1"/>
    <property type="molecule type" value="Genomic_DNA"/>
</dbReference>
<dbReference type="RefSeq" id="WP_010946570.1">
    <property type="nucleotide sequence ID" value="NC_006368.1"/>
</dbReference>
<dbReference type="SMR" id="Q5X6R9"/>
<dbReference type="GeneID" id="57034822"/>
<dbReference type="KEGG" id="lpp:lpp0896"/>
<dbReference type="LegioList" id="lpp0896"/>
<dbReference type="HOGENOM" id="CLU_034315_2_1_6"/>
<dbReference type="UniPathway" id="UPA00035">
    <property type="reaction ID" value="UER00041"/>
</dbReference>
<dbReference type="GO" id="GO:0005829">
    <property type="term" value="C:cytosol"/>
    <property type="evidence" value="ECO:0007669"/>
    <property type="project" value="TreeGrafter"/>
</dbReference>
<dbReference type="GO" id="GO:0004048">
    <property type="term" value="F:anthranilate phosphoribosyltransferase activity"/>
    <property type="evidence" value="ECO:0007669"/>
    <property type="project" value="UniProtKB-UniRule"/>
</dbReference>
<dbReference type="GO" id="GO:0000287">
    <property type="term" value="F:magnesium ion binding"/>
    <property type="evidence" value="ECO:0007669"/>
    <property type="project" value="UniProtKB-UniRule"/>
</dbReference>
<dbReference type="GO" id="GO:0000162">
    <property type="term" value="P:L-tryptophan biosynthetic process"/>
    <property type="evidence" value="ECO:0007669"/>
    <property type="project" value="UniProtKB-UniRule"/>
</dbReference>
<dbReference type="FunFam" id="3.40.1030.10:FF:000002">
    <property type="entry name" value="Anthranilate phosphoribosyltransferase"/>
    <property type="match status" value="1"/>
</dbReference>
<dbReference type="Gene3D" id="3.40.1030.10">
    <property type="entry name" value="Nucleoside phosphorylase/phosphoribosyltransferase catalytic domain"/>
    <property type="match status" value="1"/>
</dbReference>
<dbReference type="Gene3D" id="1.20.970.10">
    <property type="entry name" value="Transferase, Pyrimidine Nucleoside Phosphorylase, Chain C"/>
    <property type="match status" value="1"/>
</dbReference>
<dbReference type="HAMAP" id="MF_00211">
    <property type="entry name" value="TrpD"/>
    <property type="match status" value="1"/>
</dbReference>
<dbReference type="InterPro" id="IPR005940">
    <property type="entry name" value="Anthranilate_Pribosyl_Tfrase"/>
</dbReference>
<dbReference type="InterPro" id="IPR000312">
    <property type="entry name" value="Glycosyl_Trfase_fam3"/>
</dbReference>
<dbReference type="InterPro" id="IPR017459">
    <property type="entry name" value="Glycosyl_Trfase_fam3_N_dom"/>
</dbReference>
<dbReference type="InterPro" id="IPR036320">
    <property type="entry name" value="Glycosyl_Trfase_fam3_N_dom_sf"/>
</dbReference>
<dbReference type="InterPro" id="IPR035902">
    <property type="entry name" value="Nuc_phospho_transferase"/>
</dbReference>
<dbReference type="NCBIfam" id="TIGR01245">
    <property type="entry name" value="trpD"/>
    <property type="match status" value="1"/>
</dbReference>
<dbReference type="PANTHER" id="PTHR43285">
    <property type="entry name" value="ANTHRANILATE PHOSPHORIBOSYLTRANSFERASE"/>
    <property type="match status" value="1"/>
</dbReference>
<dbReference type="PANTHER" id="PTHR43285:SF2">
    <property type="entry name" value="ANTHRANILATE PHOSPHORIBOSYLTRANSFERASE"/>
    <property type="match status" value="1"/>
</dbReference>
<dbReference type="Pfam" id="PF02885">
    <property type="entry name" value="Glycos_trans_3N"/>
    <property type="match status" value="1"/>
</dbReference>
<dbReference type="Pfam" id="PF00591">
    <property type="entry name" value="Glycos_transf_3"/>
    <property type="match status" value="1"/>
</dbReference>
<dbReference type="SUPFAM" id="SSF52418">
    <property type="entry name" value="Nucleoside phosphorylase/phosphoribosyltransferase catalytic domain"/>
    <property type="match status" value="1"/>
</dbReference>
<dbReference type="SUPFAM" id="SSF47648">
    <property type="entry name" value="Nucleoside phosphorylase/phosphoribosyltransferase N-terminal domain"/>
    <property type="match status" value="1"/>
</dbReference>